<dbReference type="EMBL" id="BX571875">
    <property type="protein sequence ID" value="CAE17240.1"/>
    <property type="molecule type" value="Genomic_DNA"/>
</dbReference>
<dbReference type="RefSeq" id="WP_011148925.1">
    <property type="nucleotide sequence ID" value="NC_005126.1"/>
</dbReference>
<dbReference type="SMR" id="Q7MY26"/>
<dbReference type="STRING" id="243265.plu4868"/>
<dbReference type="GeneID" id="48851097"/>
<dbReference type="KEGG" id="plu:plu4868"/>
<dbReference type="eggNOG" id="COG1309">
    <property type="taxonomic scope" value="Bacteria"/>
</dbReference>
<dbReference type="HOGENOM" id="CLU_069356_5_0_6"/>
<dbReference type="OrthoDB" id="9179041at2"/>
<dbReference type="Proteomes" id="UP000002514">
    <property type="component" value="Chromosome"/>
</dbReference>
<dbReference type="GO" id="GO:0043590">
    <property type="term" value="C:bacterial nucleoid"/>
    <property type="evidence" value="ECO:0007669"/>
    <property type="project" value="UniProtKB-UniRule"/>
</dbReference>
<dbReference type="GO" id="GO:0005737">
    <property type="term" value="C:cytoplasm"/>
    <property type="evidence" value="ECO:0007669"/>
    <property type="project" value="UniProtKB-UniRule"/>
</dbReference>
<dbReference type="GO" id="GO:0003700">
    <property type="term" value="F:DNA-binding transcription factor activity"/>
    <property type="evidence" value="ECO:0007669"/>
    <property type="project" value="TreeGrafter"/>
</dbReference>
<dbReference type="GO" id="GO:0000976">
    <property type="term" value="F:transcription cis-regulatory region binding"/>
    <property type="evidence" value="ECO:0007669"/>
    <property type="project" value="TreeGrafter"/>
</dbReference>
<dbReference type="GO" id="GO:0051301">
    <property type="term" value="P:cell division"/>
    <property type="evidence" value="ECO:0007669"/>
    <property type="project" value="UniProtKB-KW"/>
</dbReference>
<dbReference type="GO" id="GO:0010974">
    <property type="term" value="P:negative regulation of division septum assembly"/>
    <property type="evidence" value="ECO:0007669"/>
    <property type="project" value="InterPro"/>
</dbReference>
<dbReference type="FunFam" id="1.10.357.10:FF:000002">
    <property type="entry name" value="Nucleoid occlusion factor SlmA"/>
    <property type="match status" value="1"/>
</dbReference>
<dbReference type="Gene3D" id="1.10.357.10">
    <property type="entry name" value="Tetracycline Repressor, domain 2"/>
    <property type="match status" value="1"/>
</dbReference>
<dbReference type="HAMAP" id="MF_01839">
    <property type="entry name" value="NO_factor_SlmA"/>
    <property type="match status" value="1"/>
</dbReference>
<dbReference type="InterPro" id="IPR023772">
    <property type="entry name" value="DNA-bd_HTH_TetR-type_CS"/>
</dbReference>
<dbReference type="InterPro" id="IPR009057">
    <property type="entry name" value="Homeodomain-like_sf"/>
</dbReference>
<dbReference type="InterPro" id="IPR050109">
    <property type="entry name" value="HTH-type_TetR-like_transc_reg"/>
</dbReference>
<dbReference type="InterPro" id="IPR001647">
    <property type="entry name" value="HTH_TetR"/>
</dbReference>
<dbReference type="InterPro" id="IPR023769">
    <property type="entry name" value="NO_SlmA"/>
</dbReference>
<dbReference type="InterPro" id="IPR054580">
    <property type="entry name" value="SlmA-like_C"/>
</dbReference>
<dbReference type="InterPro" id="IPR036271">
    <property type="entry name" value="Tet_transcr_reg_TetR-rel_C_sf"/>
</dbReference>
<dbReference type="NCBIfam" id="NF007015">
    <property type="entry name" value="PRK09480.1"/>
    <property type="match status" value="1"/>
</dbReference>
<dbReference type="PANTHER" id="PTHR30055">
    <property type="entry name" value="HTH-TYPE TRANSCRIPTIONAL REGULATOR RUTR"/>
    <property type="match status" value="1"/>
</dbReference>
<dbReference type="PANTHER" id="PTHR30055:SF183">
    <property type="entry name" value="NUCLEOID OCCLUSION FACTOR SLMA"/>
    <property type="match status" value="1"/>
</dbReference>
<dbReference type="Pfam" id="PF22276">
    <property type="entry name" value="SlmA-like_C"/>
    <property type="match status" value="1"/>
</dbReference>
<dbReference type="Pfam" id="PF00440">
    <property type="entry name" value="TetR_N"/>
    <property type="match status" value="1"/>
</dbReference>
<dbReference type="SUPFAM" id="SSF46689">
    <property type="entry name" value="Homeodomain-like"/>
    <property type="match status" value="1"/>
</dbReference>
<dbReference type="SUPFAM" id="SSF48498">
    <property type="entry name" value="Tetracyclin repressor-like, C-terminal domain"/>
    <property type="match status" value="1"/>
</dbReference>
<dbReference type="PROSITE" id="PS01081">
    <property type="entry name" value="HTH_TETR_1"/>
    <property type="match status" value="1"/>
</dbReference>
<dbReference type="PROSITE" id="PS50977">
    <property type="entry name" value="HTH_TETR_2"/>
    <property type="match status" value="1"/>
</dbReference>
<proteinExistence type="inferred from homology"/>
<evidence type="ECO:0000255" key="1">
    <source>
        <dbReference type="HAMAP-Rule" id="MF_01839"/>
    </source>
</evidence>
<accession>Q7MY26</accession>
<gene>
    <name evidence="1" type="primary">slmA</name>
    <name type="ordered locus">plu4868</name>
</gene>
<name>SLMA_PHOLL</name>
<protein>
    <recommendedName>
        <fullName evidence="1">Nucleoid occlusion factor SlmA</fullName>
    </recommendedName>
</protein>
<organism>
    <name type="scientific">Photorhabdus laumondii subsp. laumondii (strain DSM 15139 / CIP 105565 / TT01)</name>
    <name type="common">Photorhabdus luminescens subsp. laumondii</name>
    <dbReference type="NCBI Taxonomy" id="243265"/>
    <lineage>
        <taxon>Bacteria</taxon>
        <taxon>Pseudomonadati</taxon>
        <taxon>Pseudomonadota</taxon>
        <taxon>Gammaproteobacteria</taxon>
        <taxon>Enterobacterales</taxon>
        <taxon>Morganellaceae</taxon>
        <taxon>Photorhabdus</taxon>
    </lineage>
</organism>
<feature type="chain" id="PRO_0000198975" description="Nucleoid occlusion factor SlmA">
    <location>
        <begin position="1"/>
        <end position="199"/>
    </location>
</feature>
<feature type="domain" description="HTH tetR-type" evidence="1">
    <location>
        <begin position="10"/>
        <end position="71"/>
    </location>
</feature>
<feature type="DNA-binding region" description="H-T-H motif" evidence="1">
    <location>
        <begin position="34"/>
        <end position="53"/>
    </location>
</feature>
<feature type="coiled-coil region" evidence="1">
    <location>
        <begin position="120"/>
        <end position="140"/>
    </location>
</feature>
<keyword id="KW-0131">Cell cycle</keyword>
<keyword id="KW-0132">Cell division</keyword>
<keyword id="KW-0175">Coiled coil</keyword>
<keyword id="KW-0963">Cytoplasm</keyword>
<keyword id="KW-0238">DNA-binding</keyword>
<keyword id="KW-1185">Reference proteome</keyword>
<comment type="function">
    <text evidence="1">Required for nucleoid occlusion (NO) phenomenon, which prevents Z-ring formation and cell division over the nucleoid. Acts as a DNA-associated cell division inhibitor that binds simultaneously chromosomal DNA and FtsZ, and disrupts the assembly of FtsZ polymers. SlmA-DNA-binding sequences (SBS) are dispersed on non-Ter regions of the chromosome, preventing FtsZ polymerization at these regions.</text>
</comment>
<comment type="subunit">
    <text evidence="1">Homodimer. Interacts with FtsZ.</text>
</comment>
<comment type="subcellular location">
    <subcellularLocation>
        <location evidence="1">Cytoplasm</location>
        <location evidence="1">Nucleoid</location>
    </subcellularLocation>
</comment>
<comment type="similarity">
    <text evidence="1">Belongs to the nucleoid occlusion factor SlmA family.</text>
</comment>
<sequence>MAENENTKKRNRREEILQALAHMLQSSDGSHRITTAKLAANVGVSEAALYRHFPSKTRMFDSLIEFIEDSLISRINLILQDEKDTITRIRLILVLILGFSEKNPGLTRIMTGHALMFEQNRLQGRINQLFERIEVQIRQVLKEKKLRDGQGFSYDESLLASQLLAFCEGMLSRFVRSEFHYRPTQEFEARWPLLLAQLQ</sequence>
<reference key="1">
    <citation type="journal article" date="2003" name="Nat. Biotechnol.">
        <title>The genome sequence of the entomopathogenic bacterium Photorhabdus luminescens.</title>
        <authorList>
            <person name="Duchaud E."/>
            <person name="Rusniok C."/>
            <person name="Frangeul L."/>
            <person name="Buchrieser C."/>
            <person name="Givaudan A."/>
            <person name="Taourit S."/>
            <person name="Bocs S."/>
            <person name="Boursaux-Eude C."/>
            <person name="Chandler M."/>
            <person name="Charles J.-F."/>
            <person name="Dassa E."/>
            <person name="Derose R."/>
            <person name="Derzelle S."/>
            <person name="Freyssinet G."/>
            <person name="Gaudriault S."/>
            <person name="Medigue C."/>
            <person name="Lanois A."/>
            <person name="Powell K."/>
            <person name="Siguier P."/>
            <person name="Vincent R."/>
            <person name="Wingate V."/>
            <person name="Zouine M."/>
            <person name="Glaser P."/>
            <person name="Boemare N."/>
            <person name="Danchin A."/>
            <person name="Kunst F."/>
        </authorList>
    </citation>
    <scope>NUCLEOTIDE SEQUENCE [LARGE SCALE GENOMIC DNA]</scope>
    <source>
        <strain>DSM 15139 / CIP 105565 / TT01</strain>
    </source>
</reference>